<sequence>MNIEQFQSMLEEKGISLSSRQLEQFGIYFETLVEWNEKMNLTAITEKEEVYLKHFFDSVTAAFYYDFSKPFSICDVGAGAGFPSIPLKICFPHLKVKIVDSLQKRINFLNHLAQKLELSDVAFCHDRAETFGKKEGVREAYDIVMARAVARLSVLSELCLPLVKVGGTFIAMKGAAANEEIENGKYALEVLGGELKEMSTFQLPFEESERNILLIEKKRKTPKKYPRKPGTPNKLPIEK</sequence>
<evidence type="ECO:0000255" key="1">
    <source>
        <dbReference type="HAMAP-Rule" id="MF_00074"/>
    </source>
</evidence>
<comment type="function">
    <text evidence="1">Specifically methylates the N7 position of guanine in position 535 of 16S rRNA.</text>
</comment>
<comment type="subcellular location">
    <subcellularLocation>
        <location evidence="1">Cytoplasm</location>
    </subcellularLocation>
</comment>
<comment type="similarity">
    <text evidence="1">Belongs to the methyltransferase superfamily. RNA methyltransferase RsmG family.</text>
</comment>
<name>RSMG_BACMK</name>
<dbReference type="EC" id="2.1.1.-" evidence="1"/>
<dbReference type="EMBL" id="CP000903">
    <property type="protein sequence ID" value="ABY46418.1"/>
    <property type="molecule type" value="Genomic_DNA"/>
</dbReference>
<dbReference type="RefSeq" id="WP_012262093.1">
    <property type="nucleotide sequence ID" value="NC_010184.1"/>
</dbReference>
<dbReference type="SMR" id="A9VTL8"/>
<dbReference type="KEGG" id="bwe:BcerKBAB4_5275"/>
<dbReference type="eggNOG" id="COG0357">
    <property type="taxonomic scope" value="Bacteria"/>
</dbReference>
<dbReference type="HOGENOM" id="CLU_065341_0_2_9"/>
<dbReference type="Proteomes" id="UP000002154">
    <property type="component" value="Chromosome"/>
</dbReference>
<dbReference type="GO" id="GO:0005829">
    <property type="term" value="C:cytosol"/>
    <property type="evidence" value="ECO:0007669"/>
    <property type="project" value="TreeGrafter"/>
</dbReference>
<dbReference type="GO" id="GO:0070043">
    <property type="term" value="F:rRNA (guanine-N7-)-methyltransferase activity"/>
    <property type="evidence" value="ECO:0007669"/>
    <property type="project" value="UniProtKB-UniRule"/>
</dbReference>
<dbReference type="CDD" id="cd02440">
    <property type="entry name" value="AdoMet_MTases"/>
    <property type="match status" value="1"/>
</dbReference>
<dbReference type="FunFam" id="3.40.50.150:FF:000041">
    <property type="entry name" value="Ribosomal RNA small subunit methyltransferase G"/>
    <property type="match status" value="1"/>
</dbReference>
<dbReference type="Gene3D" id="3.40.50.150">
    <property type="entry name" value="Vaccinia Virus protein VP39"/>
    <property type="match status" value="1"/>
</dbReference>
<dbReference type="HAMAP" id="MF_00074">
    <property type="entry name" value="16SrRNA_methyltr_G"/>
    <property type="match status" value="1"/>
</dbReference>
<dbReference type="InterPro" id="IPR003682">
    <property type="entry name" value="rRNA_ssu_MeTfrase_G"/>
</dbReference>
<dbReference type="InterPro" id="IPR029063">
    <property type="entry name" value="SAM-dependent_MTases_sf"/>
</dbReference>
<dbReference type="NCBIfam" id="TIGR00138">
    <property type="entry name" value="rsmG_gidB"/>
    <property type="match status" value="1"/>
</dbReference>
<dbReference type="PANTHER" id="PTHR31760">
    <property type="entry name" value="S-ADENOSYL-L-METHIONINE-DEPENDENT METHYLTRANSFERASES SUPERFAMILY PROTEIN"/>
    <property type="match status" value="1"/>
</dbReference>
<dbReference type="PANTHER" id="PTHR31760:SF0">
    <property type="entry name" value="S-ADENOSYL-L-METHIONINE-DEPENDENT METHYLTRANSFERASES SUPERFAMILY PROTEIN"/>
    <property type="match status" value="1"/>
</dbReference>
<dbReference type="Pfam" id="PF02527">
    <property type="entry name" value="GidB"/>
    <property type="match status" value="1"/>
</dbReference>
<dbReference type="PIRSF" id="PIRSF003078">
    <property type="entry name" value="GidB"/>
    <property type="match status" value="1"/>
</dbReference>
<dbReference type="SUPFAM" id="SSF53335">
    <property type="entry name" value="S-adenosyl-L-methionine-dependent methyltransferases"/>
    <property type="match status" value="1"/>
</dbReference>
<protein>
    <recommendedName>
        <fullName evidence="1">Ribosomal RNA small subunit methyltransferase G</fullName>
        <ecNumber evidence="1">2.1.1.-</ecNumber>
    </recommendedName>
    <alternativeName>
        <fullName evidence="1">16S rRNA 7-methylguanosine methyltransferase</fullName>
        <shortName evidence="1">16S rRNA m7G methyltransferase</shortName>
    </alternativeName>
</protein>
<feature type="chain" id="PRO_1000092611" description="Ribosomal RNA small subunit methyltransferase G">
    <location>
        <begin position="1"/>
        <end position="239"/>
    </location>
</feature>
<feature type="binding site" evidence="1">
    <location>
        <position position="77"/>
    </location>
    <ligand>
        <name>S-adenosyl-L-methionine</name>
        <dbReference type="ChEBI" id="CHEBI:59789"/>
    </ligand>
</feature>
<feature type="binding site" evidence="1">
    <location>
        <position position="82"/>
    </location>
    <ligand>
        <name>S-adenosyl-L-methionine</name>
        <dbReference type="ChEBI" id="CHEBI:59789"/>
    </ligand>
</feature>
<feature type="binding site" evidence="1">
    <location>
        <begin position="128"/>
        <end position="129"/>
    </location>
    <ligand>
        <name>S-adenosyl-L-methionine</name>
        <dbReference type="ChEBI" id="CHEBI:59789"/>
    </ligand>
</feature>
<feature type="binding site" evidence="1">
    <location>
        <position position="147"/>
    </location>
    <ligand>
        <name>S-adenosyl-L-methionine</name>
        <dbReference type="ChEBI" id="CHEBI:59789"/>
    </ligand>
</feature>
<proteinExistence type="inferred from homology"/>
<reference key="1">
    <citation type="journal article" date="2008" name="Chem. Biol. Interact.">
        <title>Extending the Bacillus cereus group genomics to putative food-borne pathogens of different toxicity.</title>
        <authorList>
            <person name="Lapidus A."/>
            <person name="Goltsman E."/>
            <person name="Auger S."/>
            <person name="Galleron N."/>
            <person name="Segurens B."/>
            <person name="Dossat C."/>
            <person name="Land M.L."/>
            <person name="Broussolle V."/>
            <person name="Brillard J."/>
            <person name="Guinebretiere M.-H."/>
            <person name="Sanchis V."/>
            <person name="Nguen-the C."/>
            <person name="Lereclus D."/>
            <person name="Richardson P."/>
            <person name="Wincker P."/>
            <person name="Weissenbach J."/>
            <person name="Ehrlich S.D."/>
            <person name="Sorokin A."/>
        </authorList>
    </citation>
    <scope>NUCLEOTIDE SEQUENCE [LARGE SCALE GENOMIC DNA]</scope>
    <source>
        <strain>KBAB4</strain>
    </source>
</reference>
<accession>A9VTL8</accession>
<gene>
    <name evidence="1" type="primary">rsmG</name>
    <name type="ordered locus">BcerKBAB4_5275</name>
</gene>
<organism>
    <name type="scientific">Bacillus mycoides (strain KBAB4)</name>
    <name type="common">Bacillus weihenstephanensis</name>
    <dbReference type="NCBI Taxonomy" id="315730"/>
    <lineage>
        <taxon>Bacteria</taxon>
        <taxon>Bacillati</taxon>
        <taxon>Bacillota</taxon>
        <taxon>Bacilli</taxon>
        <taxon>Bacillales</taxon>
        <taxon>Bacillaceae</taxon>
        <taxon>Bacillus</taxon>
        <taxon>Bacillus cereus group</taxon>
    </lineage>
</organism>
<keyword id="KW-0963">Cytoplasm</keyword>
<keyword id="KW-0489">Methyltransferase</keyword>
<keyword id="KW-0698">rRNA processing</keyword>
<keyword id="KW-0949">S-adenosyl-L-methionine</keyword>
<keyword id="KW-0808">Transferase</keyword>